<sequence>MTSRDSASSEITPAVLLRAYACGIFPMAESADDPTLFWVEPELRGVIPLGGFRVASRLARTVRSDGFRVTVNTAFKATIAGCAAPQAGREDTWINKRIRDLYSGLFELGHCHSVEAWQGDDLVGGLYGVSLGRAFFGESMFHTARDASKVALVHLVARLIHGGFELLDTQYVTEHLKNFGAVEIPRRRYTALLDKALAGEPGDFLKLSPGEAIPGARALEIIASRQ</sequence>
<comment type="function">
    <text evidence="1">Functions in the N-end rule pathway of protein degradation where it conjugates Leu, Phe and, less efficiently, Met from aminoacyl-tRNAs to the N-termini of proteins containing an N-terminal arginine or lysine.</text>
</comment>
<comment type="catalytic activity">
    <reaction evidence="1">
        <text>N-terminal L-lysyl-[protein] + L-leucyl-tRNA(Leu) = N-terminal L-leucyl-L-lysyl-[protein] + tRNA(Leu) + H(+)</text>
        <dbReference type="Rhea" id="RHEA:12340"/>
        <dbReference type="Rhea" id="RHEA-COMP:9613"/>
        <dbReference type="Rhea" id="RHEA-COMP:9622"/>
        <dbReference type="Rhea" id="RHEA-COMP:12670"/>
        <dbReference type="Rhea" id="RHEA-COMP:12671"/>
        <dbReference type="ChEBI" id="CHEBI:15378"/>
        <dbReference type="ChEBI" id="CHEBI:65249"/>
        <dbReference type="ChEBI" id="CHEBI:78442"/>
        <dbReference type="ChEBI" id="CHEBI:78494"/>
        <dbReference type="ChEBI" id="CHEBI:133043"/>
        <dbReference type="EC" id="2.3.2.6"/>
    </reaction>
</comment>
<comment type="catalytic activity">
    <reaction evidence="1">
        <text>N-terminal L-arginyl-[protein] + L-leucyl-tRNA(Leu) = N-terminal L-leucyl-L-arginyl-[protein] + tRNA(Leu) + H(+)</text>
        <dbReference type="Rhea" id="RHEA:50416"/>
        <dbReference type="Rhea" id="RHEA-COMP:9613"/>
        <dbReference type="Rhea" id="RHEA-COMP:9622"/>
        <dbReference type="Rhea" id="RHEA-COMP:12672"/>
        <dbReference type="Rhea" id="RHEA-COMP:12673"/>
        <dbReference type="ChEBI" id="CHEBI:15378"/>
        <dbReference type="ChEBI" id="CHEBI:64719"/>
        <dbReference type="ChEBI" id="CHEBI:78442"/>
        <dbReference type="ChEBI" id="CHEBI:78494"/>
        <dbReference type="ChEBI" id="CHEBI:133044"/>
        <dbReference type="EC" id="2.3.2.6"/>
    </reaction>
</comment>
<comment type="catalytic activity">
    <reaction evidence="1">
        <text>L-phenylalanyl-tRNA(Phe) + an N-terminal L-alpha-aminoacyl-[protein] = an N-terminal L-phenylalanyl-L-alpha-aminoacyl-[protein] + tRNA(Phe)</text>
        <dbReference type="Rhea" id="RHEA:43632"/>
        <dbReference type="Rhea" id="RHEA-COMP:9668"/>
        <dbReference type="Rhea" id="RHEA-COMP:9699"/>
        <dbReference type="Rhea" id="RHEA-COMP:10636"/>
        <dbReference type="Rhea" id="RHEA-COMP:10637"/>
        <dbReference type="ChEBI" id="CHEBI:78442"/>
        <dbReference type="ChEBI" id="CHEBI:78531"/>
        <dbReference type="ChEBI" id="CHEBI:78597"/>
        <dbReference type="ChEBI" id="CHEBI:83561"/>
        <dbReference type="EC" id="2.3.2.6"/>
    </reaction>
</comment>
<comment type="subcellular location">
    <subcellularLocation>
        <location evidence="1">Cytoplasm</location>
    </subcellularLocation>
</comment>
<comment type="similarity">
    <text evidence="1">Belongs to the L/F-transferase family.</text>
</comment>
<keyword id="KW-0012">Acyltransferase</keyword>
<keyword id="KW-0963">Cytoplasm</keyword>
<keyword id="KW-1185">Reference proteome</keyword>
<keyword id="KW-0808">Transferase</keyword>
<name>LFTR_BRADU</name>
<proteinExistence type="inferred from homology"/>
<evidence type="ECO:0000255" key="1">
    <source>
        <dbReference type="HAMAP-Rule" id="MF_00688"/>
    </source>
</evidence>
<gene>
    <name evidence="1" type="primary">aat</name>
    <name type="ordered locus">bll4286</name>
</gene>
<accession>Q89MA7</accession>
<dbReference type="EC" id="2.3.2.6" evidence="1"/>
<dbReference type="EMBL" id="BA000040">
    <property type="protein sequence ID" value="BAC49551.1"/>
    <property type="molecule type" value="Genomic_DNA"/>
</dbReference>
<dbReference type="RefSeq" id="NP_770926.1">
    <property type="nucleotide sequence ID" value="NC_004463.1"/>
</dbReference>
<dbReference type="RefSeq" id="WP_011087059.1">
    <property type="nucleotide sequence ID" value="NC_004463.1"/>
</dbReference>
<dbReference type="SMR" id="Q89MA7"/>
<dbReference type="FunCoup" id="Q89MA7">
    <property type="interactions" value="308"/>
</dbReference>
<dbReference type="STRING" id="224911.AAV28_18490"/>
<dbReference type="EnsemblBacteria" id="BAC49551">
    <property type="protein sequence ID" value="BAC49551"/>
    <property type="gene ID" value="BAC49551"/>
</dbReference>
<dbReference type="GeneID" id="46491282"/>
<dbReference type="KEGG" id="bja:bll4286"/>
<dbReference type="PATRIC" id="fig|224911.44.peg.4026"/>
<dbReference type="eggNOG" id="COG2360">
    <property type="taxonomic scope" value="Bacteria"/>
</dbReference>
<dbReference type="HOGENOM" id="CLU_075045_1_1_5"/>
<dbReference type="InParanoid" id="Q89MA7"/>
<dbReference type="OrthoDB" id="9790282at2"/>
<dbReference type="PhylomeDB" id="Q89MA7"/>
<dbReference type="Proteomes" id="UP000002526">
    <property type="component" value="Chromosome"/>
</dbReference>
<dbReference type="GO" id="GO:0005737">
    <property type="term" value="C:cytoplasm"/>
    <property type="evidence" value="ECO:0000318"/>
    <property type="project" value="GO_Central"/>
</dbReference>
<dbReference type="GO" id="GO:0008914">
    <property type="term" value="F:leucyl-tRNA--protein transferase activity"/>
    <property type="evidence" value="ECO:0000318"/>
    <property type="project" value="GO_Central"/>
</dbReference>
<dbReference type="GO" id="GO:0030163">
    <property type="term" value="P:protein catabolic process"/>
    <property type="evidence" value="ECO:0007669"/>
    <property type="project" value="UniProtKB-UniRule"/>
</dbReference>
<dbReference type="FunFam" id="3.40.630.70:FF:000001">
    <property type="entry name" value="Leucyl/phenylalanyl-tRNA--protein transferase"/>
    <property type="match status" value="1"/>
</dbReference>
<dbReference type="Gene3D" id="3.40.630.70">
    <property type="entry name" value="Leucyl/phenylalanyl-tRNA-protein transferase, C-terminal domain"/>
    <property type="match status" value="1"/>
</dbReference>
<dbReference type="Gene3D" id="3.30.70.3550">
    <property type="entry name" value="Leucyl/phenylalanyl-tRNA-protein transferase, N-terminal domain"/>
    <property type="match status" value="1"/>
</dbReference>
<dbReference type="HAMAP" id="MF_00688">
    <property type="entry name" value="Leu_Phe_trans"/>
    <property type="match status" value="1"/>
</dbReference>
<dbReference type="InterPro" id="IPR016181">
    <property type="entry name" value="Acyl_CoA_acyltransferase"/>
</dbReference>
<dbReference type="InterPro" id="IPR004616">
    <property type="entry name" value="Leu/Phe-tRNA_Trfase"/>
</dbReference>
<dbReference type="InterPro" id="IPR042203">
    <property type="entry name" value="Leu/Phe-tRNA_Trfase_C"/>
</dbReference>
<dbReference type="InterPro" id="IPR042221">
    <property type="entry name" value="Leu/Phe-tRNA_Trfase_N"/>
</dbReference>
<dbReference type="NCBIfam" id="TIGR00667">
    <property type="entry name" value="aat"/>
    <property type="match status" value="1"/>
</dbReference>
<dbReference type="PANTHER" id="PTHR30098">
    <property type="entry name" value="LEUCYL/PHENYLALANYL-TRNA--PROTEIN TRANSFERASE"/>
    <property type="match status" value="1"/>
</dbReference>
<dbReference type="PANTHER" id="PTHR30098:SF2">
    <property type="entry name" value="LEUCYL_PHENYLALANYL-TRNA--PROTEIN TRANSFERASE"/>
    <property type="match status" value="1"/>
</dbReference>
<dbReference type="Pfam" id="PF03588">
    <property type="entry name" value="Leu_Phe_trans"/>
    <property type="match status" value="1"/>
</dbReference>
<dbReference type="SUPFAM" id="SSF55729">
    <property type="entry name" value="Acyl-CoA N-acyltransferases (Nat)"/>
    <property type="match status" value="1"/>
</dbReference>
<protein>
    <recommendedName>
        <fullName evidence="1">Leucyl/phenylalanyl-tRNA--protein transferase</fullName>
        <ecNumber evidence="1">2.3.2.6</ecNumber>
    </recommendedName>
    <alternativeName>
        <fullName evidence="1">L/F-transferase</fullName>
    </alternativeName>
    <alternativeName>
        <fullName evidence="1">Leucyltransferase</fullName>
    </alternativeName>
    <alternativeName>
        <fullName evidence="1">Phenyalanyltransferase</fullName>
    </alternativeName>
</protein>
<feature type="chain" id="PRO_0000207207" description="Leucyl/phenylalanyl-tRNA--protein transferase">
    <location>
        <begin position="1"/>
        <end position="226"/>
    </location>
</feature>
<organism>
    <name type="scientific">Bradyrhizobium diazoefficiens (strain JCM 10833 / BCRC 13528 / IAM 13628 / NBRC 14792 / USDA 110)</name>
    <dbReference type="NCBI Taxonomy" id="224911"/>
    <lineage>
        <taxon>Bacteria</taxon>
        <taxon>Pseudomonadati</taxon>
        <taxon>Pseudomonadota</taxon>
        <taxon>Alphaproteobacteria</taxon>
        <taxon>Hyphomicrobiales</taxon>
        <taxon>Nitrobacteraceae</taxon>
        <taxon>Bradyrhizobium</taxon>
    </lineage>
</organism>
<reference key="1">
    <citation type="journal article" date="2002" name="DNA Res.">
        <title>Complete genomic sequence of nitrogen-fixing symbiotic bacterium Bradyrhizobium japonicum USDA110.</title>
        <authorList>
            <person name="Kaneko T."/>
            <person name="Nakamura Y."/>
            <person name="Sato S."/>
            <person name="Minamisawa K."/>
            <person name="Uchiumi T."/>
            <person name="Sasamoto S."/>
            <person name="Watanabe A."/>
            <person name="Idesawa K."/>
            <person name="Iriguchi M."/>
            <person name="Kawashima K."/>
            <person name="Kohara M."/>
            <person name="Matsumoto M."/>
            <person name="Shimpo S."/>
            <person name="Tsuruoka H."/>
            <person name="Wada T."/>
            <person name="Yamada M."/>
            <person name="Tabata S."/>
        </authorList>
    </citation>
    <scope>NUCLEOTIDE SEQUENCE [LARGE SCALE GENOMIC DNA]</scope>
    <source>
        <strain>JCM 10833 / BCRC 13528 / IAM 13628 / NBRC 14792 / USDA 110</strain>
    </source>
</reference>